<gene>
    <name evidence="1" type="primary">rplD</name>
    <name type="ordered locus">LSL_1434</name>
</gene>
<sequence length="207" mass="22367">MPTVALFKQDGNQNGEVQLNEAIFGIEPNNNVVFDAVIMQRASLRQGTHAVKNRSAVRGGGKKPWRQKGTGRARQGSIRSPQWVGGGTVFGPTPRSYSYKLPRKVRRLAIKSVLSQKVADESLVVVDALNFDAPKTKAFAEVLSNLNVNSKVLVVLEDDNTTAALAARNLKNVTVIPAKGLNVLDVINNDKLVITQGALSQVEEVLA</sequence>
<accession>Q1WS91</accession>
<feature type="chain" id="PRO_1000052427" description="Large ribosomal subunit protein uL4">
    <location>
        <begin position="1"/>
        <end position="207"/>
    </location>
</feature>
<feature type="region of interest" description="Disordered" evidence="2">
    <location>
        <begin position="49"/>
        <end position="78"/>
    </location>
</feature>
<feature type="compositionally biased region" description="Basic residues" evidence="2">
    <location>
        <begin position="60"/>
        <end position="71"/>
    </location>
</feature>
<protein>
    <recommendedName>
        <fullName evidence="1">Large ribosomal subunit protein uL4</fullName>
    </recommendedName>
    <alternativeName>
        <fullName evidence="3">50S ribosomal protein L4</fullName>
    </alternativeName>
</protein>
<evidence type="ECO:0000255" key="1">
    <source>
        <dbReference type="HAMAP-Rule" id="MF_01328"/>
    </source>
</evidence>
<evidence type="ECO:0000256" key="2">
    <source>
        <dbReference type="SAM" id="MobiDB-lite"/>
    </source>
</evidence>
<evidence type="ECO:0000305" key="3"/>
<comment type="function">
    <text evidence="1">One of the primary rRNA binding proteins, this protein initially binds near the 5'-end of the 23S rRNA. It is important during the early stages of 50S assembly. It makes multiple contacts with different domains of the 23S rRNA in the assembled 50S subunit and ribosome.</text>
</comment>
<comment type="function">
    <text evidence="1">Forms part of the polypeptide exit tunnel.</text>
</comment>
<comment type="subunit">
    <text evidence="1">Part of the 50S ribosomal subunit.</text>
</comment>
<comment type="similarity">
    <text evidence="1">Belongs to the universal ribosomal protein uL4 family.</text>
</comment>
<proteinExistence type="inferred from homology"/>
<organism>
    <name type="scientific">Ligilactobacillus salivarius (strain UCC118)</name>
    <name type="common">Lactobacillus salivarius</name>
    <dbReference type="NCBI Taxonomy" id="362948"/>
    <lineage>
        <taxon>Bacteria</taxon>
        <taxon>Bacillati</taxon>
        <taxon>Bacillota</taxon>
        <taxon>Bacilli</taxon>
        <taxon>Lactobacillales</taxon>
        <taxon>Lactobacillaceae</taxon>
        <taxon>Ligilactobacillus</taxon>
    </lineage>
</organism>
<name>RL4_LIGS1</name>
<reference key="1">
    <citation type="journal article" date="2006" name="Proc. Natl. Acad. Sci. U.S.A.">
        <title>Multireplicon genome architecture of Lactobacillus salivarius.</title>
        <authorList>
            <person name="Claesson M.J."/>
            <person name="Li Y."/>
            <person name="Leahy S."/>
            <person name="Canchaya C."/>
            <person name="van Pijkeren J.P."/>
            <person name="Cerdeno-Tarraga A.M."/>
            <person name="Parkhill J."/>
            <person name="Flynn S."/>
            <person name="O'Sullivan G.C."/>
            <person name="Collins J.K."/>
            <person name="Higgins D."/>
            <person name="Shanahan F."/>
            <person name="Fitzgerald G.F."/>
            <person name="van Sinderen D."/>
            <person name="O'Toole P.W."/>
        </authorList>
    </citation>
    <scope>NUCLEOTIDE SEQUENCE [LARGE SCALE GENOMIC DNA]</scope>
    <source>
        <strain>UCC118</strain>
    </source>
</reference>
<dbReference type="EMBL" id="CP000233">
    <property type="protein sequence ID" value="ABE00238.1"/>
    <property type="molecule type" value="Genomic_DNA"/>
</dbReference>
<dbReference type="RefSeq" id="WP_003701303.1">
    <property type="nucleotide sequence ID" value="NC_007929.1"/>
</dbReference>
<dbReference type="RefSeq" id="YP_536321.1">
    <property type="nucleotide sequence ID" value="NC_007929.1"/>
</dbReference>
<dbReference type="SMR" id="Q1WS91"/>
<dbReference type="STRING" id="362948.LSL_1434"/>
<dbReference type="GeneID" id="89466169"/>
<dbReference type="KEGG" id="lsl:LSL_1434"/>
<dbReference type="PATRIC" id="fig|362948.14.peg.1517"/>
<dbReference type="HOGENOM" id="CLU_041575_5_2_9"/>
<dbReference type="OrthoDB" id="9803201at2"/>
<dbReference type="Proteomes" id="UP000006559">
    <property type="component" value="Chromosome"/>
</dbReference>
<dbReference type="GO" id="GO:1990904">
    <property type="term" value="C:ribonucleoprotein complex"/>
    <property type="evidence" value="ECO:0007669"/>
    <property type="project" value="UniProtKB-KW"/>
</dbReference>
<dbReference type="GO" id="GO:0005840">
    <property type="term" value="C:ribosome"/>
    <property type="evidence" value="ECO:0007669"/>
    <property type="project" value="UniProtKB-KW"/>
</dbReference>
<dbReference type="GO" id="GO:0019843">
    <property type="term" value="F:rRNA binding"/>
    <property type="evidence" value="ECO:0007669"/>
    <property type="project" value="UniProtKB-UniRule"/>
</dbReference>
<dbReference type="GO" id="GO:0003735">
    <property type="term" value="F:structural constituent of ribosome"/>
    <property type="evidence" value="ECO:0007669"/>
    <property type="project" value="InterPro"/>
</dbReference>
<dbReference type="GO" id="GO:0006412">
    <property type="term" value="P:translation"/>
    <property type="evidence" value="ECO:0007669"/>
    <property type="project" value="UniProtKB-UniRule"/>
</dbReference>
<dbReference type="FunFam" id="3.40.1370.10:FF:000003">
    <property type="entry name" value="50S ribosomal protein L4"/>
    <property type="match status" value="1"/>
</dbReference>
<dbReference type="Gene3D" id="3.40.1370.10">
    <property type="match status" value="1"/>
</dbReference>
<dbReference type="HAMAP" id="MF_01328_B">
    <property type="entry name" value="Ribosomal_uL4_B"/>
    <property type="match status" value="1"/>
</dbReference>
<dbReference type="InterPro" id="IPR002136">
    <property type="entry name" value="Ribosomal_uL4"/>
</dbReference>
<dbReference type="InterPro" id="IPR013005">
    <property type="entry name" value="Ribosomal_uL4-like"/>
</dbReference>
<dbReference type="InterPro" id="IPR023574">
    <property type="entry name" value="Ribosomal_uL4_dom_sf"/>
</dbReference>
<dbReference type="NCBIfam" id="TIGR03953">
    <property type="entry name" value="rplD_bact"/>
    <property type="match status" value="1"/>
</dbReference>
<dbReference type="PANTHER" id="PTHR10746">
    <property type="entry name" value="50S RIBOSOMAL PROTEIN L4"/>
    <property type="match status" value="1"/>
</dbReference>
<dbReference type="PANTHER" id="PTHR10746:SF6">
    <property type="entry name" value="LARGE RIBOSOMAL SUBUNIT PROTEIN UL4M"/>
    <property type="match status" value="1"/>
</dbReference>
<dbReference type="Pfam" id="PF00573">
    <property type="entry name" value="Ribosomal_L4"/>
    <property type="match status" value="1"/>
</dbReference>
<dbReference type="SUPFAM" id="SSF52166">
    <property type="entry name" value="Ribosomal protein L4"/>
    <property type="match status" value="1"/>
</dbReference>
<keyword id="KW-1185">Reference proteome</keyword>
<keyword id="KW-0687">Ribonucleoprotein</keyword>
<keyword id="KW-0689">Ribosomal protein</keyword>
<keyword id="KW-0694">RNA-binding</keyword>
<keyword id="KW-0699">rRNA-binding</keyword>